<dbReference type="EMBL" id="AB075858">
    <property type="protein sequence ID" value="BAB85564.1"/>
    <property type="status" value="ALT_SEQ"/>
    <property type="molecule type" value="mRNA"/>
</dbReference>
<dbReference type="EMBL" id="AC011511">
    <property type="status" value="NOT_ANNOTATED_CDS"/>
    <property type="molecule type" value="Genomic_DNA"/>
</dbReference>
<dbReference type="EMBL" id="BC037428">
    <property type="status" value="NOT_ANNOTATED_CDS"/>
    <property type="molecule type" value="mRNA"/>
</dbReference>
<dbReference type="EMBL" id="BC037565">
    <property type="protein sequence ID" value="AAH37565.1"/>
    <property type="status" value="ALT_SEQ"/>
    <property type="molecule type" value="mRNA"/>
</dbReference>
<dbReference type="CCDS" id="CCDS45960.2">
    <molecule id="Q8IY67-2"/>
</dbReference>
<dbReference type="RefSeq" id="NP_597709.2">
    <property type="nucleotide sequence ID" value="NM_133452.2"/>
</dbReference>
<dbReference type="PDB" id="3H2U">
    <property type="method" value="X-ray"/>
    <property type="resolution" value="2.75 A"/>
    <property type="chains" value="B/D=39-321"/>
</dbReference>
<dbReference type="PDB" id="3H2V">
    <property type="method" value="X-ray"/>
    <property type="resolution" value="2.90 A"/>
    <property type="chains" value="E/F/G/H=59-130"/>
</dbReference>
<dbReference type="PDB" id="3SMZ">
    <property type="method" value="X-ray"/>
    <property type="resolution" value="1.99 A"/>
    <property type="chains" value="A=39-320"/>
</dbReference>
<dbReference type="PDB" id="3VF0">
    <property type="method" value="X-ray"/>
    <property type="resolution" value="2.54 A"/>
    <property type="chains" value="B=39-321"/>
</dbReference>
<dbReference type="PDBsum" id="3H2U"/>
<dbReference type="PDBsum" id="3H2V"/>
<dbReference type="PDBsum" id="3SMZ"/>
<dbReference type="PDBsum" id="3VF0"/>
<dbReference type="SMR" id="Q8IY67"/>
<dbReference type="BioGRID" id="125936">
    <property type="interactions" value="180"/>
</dbReference>
<dbReference type="DIP" id="DIP-46973N"/>
<dbReference type="FunCoup" id="Q8IY67">
    <property type="interactions" value="1537"/>
</dbReference>
<dbReference type="IntAct" id="Q8IY67">
    <property type="interactions" value="69"/>
</dbReference>
<dbReference type="MINT" id="Q8IY67"/>
<dbReference type="STRING" id="9606.ENSP00000482486"/>
<dbReference type="GlyGen" id="Q8IY67">
    <property type="glycosylation" value="1 site, 1 O-linked glycan (1 site)"/>
</dbReference>
<dbReference type="iPTMnet" id="Q8IY67"/>
<dbReference type="PhosphoSitePlus" id="Q8IY67"/>
<dbReference type="SwissPalm" id="Q8IY67"/>
<dbReference type="BioMuta" id="RAVER1"/>
<dbReference type="DMDM" id="74759693"/>
<dbReference type="CPTAC" id="CPTAC-997"/>
<dbReference type="jPOST" id="Q8IY67"/>
<dbReference type="MassIVE" id="Q8IY67"/>
<dbReference type="PeptideAtlas" id="Q8IY67"/>
<dbReference type="ProteomicsDB" id="71118">
    <molecule id="Q8IY67-1"/>
</dbReference>
<dbReference type="ProteomicsDB" id="71119">
    <molecule id="Q8IY67-2"/>
</dbReference>
<dbReference type="ProteomicsDB" id="71120">
    <molecule id="Q8IY67-3"/>
</dbReference>
<dbReference type="Pumba" id="Q8IY67"/>
<dbReference type="Antibodypedia" id="6733">
    <property type="antibodies" value="115 antibodies from 19 providers"/>
</dbReference>
<dbReference type="DNASU" id="125950"/>
<dbReference type="GeneID" id="125950"/>
<dbReference type="KEGG" id="hsa:125950"/>
<dbReference type="UCSC" id="uc060tgw.1">
    <molecule id="Q8IY67-1"/>
    <property type="organism name" value="human"/>
</dbReference>
<dbReference type="AGR" id="HGNC:30296"/>
<dbReference type="CTD" id="125950"/>
<dbReference type="DisGeNET" id="125950"/>
<dbReference type="GeneCards" id="RAVER1"/>
<dbReference type="HGNC" id="HGNC:30296">
    <property type="gene designation" value="RAVER1"/>
</dbReference>
<dbReference type="MIM" id="609950">
    <property type="type" value="gene"/>
</dbReference>
<dbReference type="neXtProt" id="NX_Q8IY67"/>
<dbReference type="PharmGKB" id="PA144596390"/>
<dbReference type="VEuPathDB" id="HostDB:ENSG00000161847"/>
<dbReference type="eggNOG" id="KOG0148">
    <property type="taxonomic scope" value="Eukaryota"/>
</dbReference>
<dbReference type="InParanoid" id="Q8IY67"/>
<dbReference type="OrthoDB" id="639027at2759"/>
<dbReference type="PAN-GO" id="Q8IY67">
    <property type="GO annotations" value="3 GO annotations based on evolutionary models"/>
</dbReference>
<dbReference type="PhylomeDB" id="Q8IY67"/>
<dbReference type="PathwayCommons" id="Q8IY67"/>
<dbReference type="SignaLink" id="Q8IY67"/>
<dbReference type="SIGNOR" id="Q8IY67"/>
<dbReference type="BioGRID-ORCS" id="125950">
    <property type="hits" value="22 hits in 1150 CRISPR screens"/>
</dbReference>
<dbReference type="ChiTaRS" id="RAVER1">
    <property type="organism name" value="human"/>
</dbReference>
<dbReference type="EvolutionaryTrace" id="Q8IY67"/>
<dbReference type="GeneWiki" id="RAVER1"/>
<dbReference type="GenomeRNAi" id="125950"/>
<dbReference type="Pharos" id="Q8IY67">
    <property type="development level" value="Tbio"/>
</dbReference>
<dbReference type="PRO" id="PR:Q8IY67"/>
<dbReference type="Proteomes" id="UP000005640">
    <property type="component" value="Chromosome 19"/>
</dbReference>
<dbReference type="RNAct" id="Q8IY67">
    <property type="molecule type" value="protein"/>
</dbReference>
<dbReference type="Bgee" id="ENSG00000161847">
    <property type="expression patterns" value="Expressed in granulocyte and 100 other cell types or tissues"/>
</dbReference>
<dbReference type="ExpressionAtlas" id="Q8IY67">
    <property type="expression patterns" value="baseline and differential"/>
</dbReference>
<dbReference type="GO" id="GO:0005737">
    <property type="term" value="C:cytoplasm"/>
    <property type="evidence" value="ECO:0007669"/>
    <property type="project" value="UniProtKB-SubCell"/>
</dbReference>
<dbReference type="GO" id="GO:0005634">
    <property type="term" value="C:nucleus"/>
    <property type="evidence" value="ECO:0007669"/>
    <property type="project" value="UniProtKB-SubCell"/>
</dbReference>
<dbReference type="GO" id="GO:0003723">
    <property type="term" value="F:RNA binding"/>
    <property type="evidence" value="ECO:0007005"/>
    <property type="project" value="UniProtKB"/>
</dbReference>
<dbReference type="CDD" id="cd12663">
    <property type="entry name" value="RRM1_RAVER1"/>
    <property type="match status" value="1"/>
</dbReference>
<dbReference type="CDD" id="cd12665">
    <property type="entry name" value="RRM2_RAVER1"/>
    <property type="match status" value="1"/>
</dbReference>
<dbReference type="CDD" id="cd12667">
    <property type="entry name" value="RRM3_RAVER1"/>
    <property type="match status" value="1"/>
</dbReference>
<dbReference type="FunFam" id="3.30.70.330:FF:000100">
    <property type="entry name" value="Putative ribonucleoprotein PTB-binding 1"/>
    <property type="match status" value="1"/>
</dbReference>
<dbReference type="FunFam" id="3.30.70.330:FF:000116">
    <property type="entry name" value="Putative ribonucleoprotein PTB-binding 1"/>
    <property type="match status" value="1"/>
</dbReference>
<dbReference type="FunFam" id="3.30.70.330:FF:000125">
    <property type="entry name" value="Putative ribonucleoprotein PTB-binding 1"/>
    <property type="match status" value="1"/>
</dbReference>
<dbReference type="Gene3D" id="3.30.70.330">
    <property type="match status" value="3"/>
</dbReference>
<dbReference type="InterPro" id="IPR050502">
    <property type="entry name" value="Euk_RNA-bind_prot"/>
</dbReference>
<dbReference type="InterPro" id="IPR012677">
    <property type="entry name" value="Nucleotide-bd_a/b_plait_sf"/>
</dbReference>
<dbReference type="InterPro" id="IPR034633">
    <property type="entry name" value="RAVER1_RRM1"/>
</dbReference>
<dbReference type="InterPro" id="IPR034635">
    <property type="entry name" value="RAVER1_RRM3"/>
</dbReference>
<dbReference type="InterPro" id="IPR035979">
    <property type="entry name" value="RBD_domain_sf"/>
</dbReference>
<dbReference type="InterPro" id="IPR000504">
    <property type="entry name" value="RRM_dom"/>
</dbReference>
<dbReference type="PANTHER" id="PTHR48025">
    <property type="entry name" value="OS02G0815200 PROTEIN"/>
    <property type="match status" value="1"/>
</dbReference>
<dbReference type="PANTHER" id="PTHR48025:SF1">
    <property type="entry name" value="RRM DOMAIN-CONTAINING PROTEIN"/>
    <property type="match status" value="1"/>
</dbReference>
<dbReference type="Pfam" id="PF00076">
    <property type="entry name" value="RRM_1"/>
    <property type="match status" value="3"/>
</dbReference>
<dbReference type="SMART" id="SM00360">
    <property type="entry name" value="RRM"/>
    <property type="match status" value="3"/>
</dbReference>
<dbReference type="SUPFAM" id="SSF54928">
    <property type="entry name" value="RNA-binding domain, RBD"/>
    <property type="match status" value="2"/>
</dbReference>
<dbReference type="PROSITE" id="PS50102">
    <property type="entry name" value="RRM"/>
    <property type="match status" value="2"/>
</dbReference>
<feature type="initiator methionine" description="Removed" evidence="12 13 15 16">
    <location>
        <position position="1"/>
    </location>
</feature>
<feature type="chain" id="PRO_0000081487" description="Ribonucleoprotein PTB-binding 1">
    <location>
        <begin position="2"/>
        <end position="606"/>
    </location>
</feature>
<feature type="domain" description="RRM 1" evidence="4">
    <location>
        <begin position="59"/>
        <end position="130"/>
    </location>
</feature>
<feature type="domain" description="RRM 2" evidence="4">
    <location>
        <begin position="132"/>
        <end position="210"/>
    </location>
</feature>
<feature type="domain" description="RRM 3" evidence="4">
    <location>
        <begin position="221"/>
        <end position="299"/>
    </location>
</feature>
<feature type="region of interest" description="Disordered" evidence="5">
    <location>
        <begin position="1"/>
        <end position="41"/>
    </location>
</feature>
<feature type="region of interest" description="Interaction with PTBP1" evidence="1">
    <location>
        <begin position="307"/>
        <end position="395"/>
    </location>
</feature>
<feature type="region of interest" description="Disordered" evidence="5">
    <location>
        <begin position="391"/>
        <end position="474"/>
    </location>
</feature>
<feature type="region of interest" description="Disordered" evidence="5">
    <location>
        <begin position="519"/>
        <end position="564"/>
    </location>
</feature>
<feature type="region of interest" description="Disordered" evidence="5">
    <location>
        <begin position="579"/>
        <end position="606"/>
    </location>
</feature>
<feature type="short sequence motif" description="Nuclear localization signal" evidence="3">
    <location>
        <begin position="45"/>
        <end position="60"/>
    </location>
</feature>
<feature type="compositionally biased region" description="Low complexity" evidence="5">
    <location>
        <begin position="453"/>
        <end position="462"/>
    </location>
</feature>
<feature type="compositionally biased region" description="Low complexity" evidence="5">
    <location>
        <begin position="592"/>
        <end position="606"/>
    </location>
</feature>
<feature type="modified residue" description="N-acetylalanine" evidence="12 13 15 16">
    <location>
        <position position="2"/>
    </location>
</feature>
<feature type="modified residue" description="Phosphoserine" evidence="17">
    <location>
        <position position="6"/>
    </location>
</feature>
<feature type="modified residue" description="Phosphoserine" evidence="12 15 16 17">
    <location>
        <position position="14"/>
    </location>
</feature>
<feature type="modified residue" description="Phosphothreonine" evidence="9 11 14 15 16 17 18">
    <location>
        <position position="463"/>
    </location>
</feature>
<feature type="modified residue" description="Phosphoserine" evidence="15">
    <location>
        <position position="474"/>
    </location>
</feature>
<feature type="modified residue" description="Phosphoserine" evidence="2">
    <location>
        <position position="562"/>
    </location>
</feature>
<feature type="splice variant" id="VSP_040968" description="In isoform 3." evidence="6">
    <original>EV</original>
    <variation>PS</variation>
    <location>
        <begin position="74"/>
        <end position="75"/>
    </location>
</feature>
<feature type="splice variant" id="VSP_040969" description="In isoform 3." evidence="6">
    <location>
        <begin position="76"/>
        <end position="606"/>
    </location>
</feature>
<feature type="splice variant" id="VSP_017035" description="In isoform 2." evidence="7">
    <original>R</original>
    <variation>RGLQKDSGPLPTPPGVSLLGEPPKDYRIPLNPYLNLHSLLPASNLAGKEARGWGGAGRSRRPAEGPLTNPPAPGGGSSSSKAFQLKSRLLSPLSSARLPPEPGLSDSYSFDYPSDMGPRRLFSHPREPALGPHGPSRHKMSPPPSGFGERSSGGSGG</variation>
    <location>
        <position position="477"/>
    </location>
</feature>
<feature type="splice variant" id="VSP_017036" description="In isoform 2." evidence="7">
    <original>VRAGGGDMQGWEAPAPQRPLTRPALPSVSRPHWAARNAALPTCCPRPSPAQKAAMWASTPRASAATTRTPT</original>
    <variation>TPLGGQKRSFAHLLPSPEPSPEGSYVGQHSQGLGGHYADSYLKRKRIF</variation>
    <location>
        <begin position="536"/>
        <end position="606"/>
    </location>
</feature>
<feature type="helix" evidence="19">
    <location>
        <begin position="41"/>
        <end position="56"/>
    </location>
</feature>
<feature type="strand" evidence="19">
    <location>
        <begin position="60"/>
        <end position="64"/>
    </location>
</feature>
<feature type="helix" evidence="19">
    <location>
        <begin position="72"/>
        <end position="78"/>
    </location>
</feature>
<feature type="turn" evidence="19">
    <location>
        <begin position="79"/>
        <end position="81"/>
    </location>
</feature>
<feature type="strand" evidence="19">
    <location>
        <begin position="84"/>
        <end position="90"/>
    </location>
</feature>
<feature type="turn" evidence="19">
    <location>
        <begin position="91"/>
        <end position="94"/>
    </location>
</feature>
<feature type="strand" evidence="19">
    <location>
        <begin position="95"/>
        <end position="102"/>
    </location>
</feature>
<feature type="helix" evidence="19">
    <location>
        <begin position="103"/>
        <end position="113"/>
    </location>
</feature>
<feature type="strand" evidence="19">
    <location>
        <begin position="124"/>
        <end position="127"/>
    </location>
</feature>
<feature type="strand" evidence="19">
    <location>
        <begin position="133"/>
        <end position="138"/>
    </location>
</feature>
<feature type="helix" evidence="19">
    <location>
        <begin position="145"/>
        <end position="152"/>
    </location>
</feature>
<feature type="helix" evidence="19">
    <location>
        <begin position="153"/>
        <end position="155"/>
    </location>
</feature>
<feature type="strand" evidence="19">
    <location>
        <begin position="158"/>
        <end position="165"/>
    </location>
</feature>
<feature type="turn" evidence="19">
    <location>
        <begin position="167"/>
        <end position="169"/>
    </location>
</feature>
<feature type="strand" evidence="19">
    <location>
        <begin position="172"/>
        <end position="182"/>
    </location>
</feature>
<feature type="helix" evidence="19">
    <location>
        <begin position="183"/>
        <end position="193"/>
    </location>
</feature>
<feature type="strand" evidence="19">
    <location>
        <begin position="204"/>
        <end position="207"/>
    </location>
</feature>
<feature type="helix" evidence="19">
    <location>
        <begin position="210"/>
        <end position="212"/>
    </location>
</feature>
<feature type="turn" evidence="19">
    <location>
        <begin position="215"/>
        <end position="218"/>
    </location>
</feature>
<feature type="strand" evidence="19">
    <location>
        <begin position="221"/>
        <end position="226"/>
    </location>
</feature>
<feature type="helix" evidence="19">
    <location>
        <begin position="235"/>
        <end position="241"/>
    </location>
</feature>
<feature type="strand" evidence="19">
    <location>
        <begin position="244"/>
        <end position="246"/>
    </location>
</feature>
<feature type="strand" evidence="19">
    <location>
        <begin position="249"/>
        <end position="255"/>
    </location>
</feature>
<feature type="strand" evidence="19">
    <location>
        <begin position="261"/>
        <end position="268"/>
    </location>
</feature>
<feature type="helix" evidence="19">
    <location>
        <begin position="272"/>
        <end position="282"/>
    </location>
</feature>
<feature type="strand" evidence="19">
    <location>
        <begin position="293"/>
        <end position="296"/>
    </location>
</feature>
<feature type="strand" evidence="19">
    <location>
        <begin position="299"/>
        <end position="301"/>
    </location>
</feature>
<feature type="helix" evidence="19">
    <location>
        <begin position="303"/>
        <end position="313"/>
    </location>
</feature>
<feature type="modified residue" description="Phosphothreonine" evidence="10 15">
    <location sequence="Q8IY67-2">
        <position position="488"/>
    </location>
</feature>
<feature type="modified residue" description="Phosphoserine" evidence="10 11 15 16">
    <location sequence="Q8IY67-2">
        <position position="567"/>
    </location>
</feature>
<protein>
    <recommendedName>
        <fullName>Ribonucleoprotein PTB-binding 1</fullName>
    </recommendedName>
    <alternativeName>
        <fullName>Protein raver-1</fullName>
    </alternativeName>
</protein>
<evidence type="ECO:0000250" key="1"/>
<evidence type="ECO:0000250" key="2">
    <source>
        <dbReference type="UniProtKB" id="Q9CW46"/>
    </source>
</evidence>
<evidence type="ECO:0000255" key="3"/>
<evidence type="ECO:0000255" key="4">
    <source>
        <dbReference type="PROSITE-ProRule" id="PRU00176"/>
    </source>
</evidence>
<evidence type="ECO:0000256" key="5">
    <source>
        <dbReference type="SAM" id="MobiDB-lite"/>
    </source>
</evidence>
<evidence type="ECO:0000303" key="6">
    <source>
    </source>
</evidence>
<evidence type="ECO:0000303" key="7">
    <source>
    </source>
</evidence>
<evidence type="ECO:0000305" key="8"/>
<evidence type="ECO:0007744" key="9">
    <source>
    </source>
</evidence>
<evidence type="ECO:0007744" key="10">
    <source>
    </source>
</evidence>
<evidence type="ECO:0007744" key="11">
    <source>
    </source>
</evidence>
<evidence type="ECO:0007744" key="12">
    <source>
    </source>
</evidence>
<evidence type="ECO:0007744" key="13">
    <source>
    </source>
</evidence>
<evidence type="ECO:0007744" key="14">
    <source>
    </source>
</evidence>
<evidence type="ECO:0007744" key="15">
    <source>
    </source>
</evidence>
<evidence type="ECO:0007744" key="16">
    <source>
    </source>
</evidence>
<evidence type="ECO:0007744" key="17">
    <source>
    </source>
</evidence>
<evidence type="ECO:0007744" key="18">
    <source>
    </source>
</evidence>
<evidence type="ECO:0007829" key="19">
    <source>
        <dbReference type="PDB" id="3SMZ"/>
    </source>
</evidence>
<keyword id="KW-0002">3D-structure</keyword>
<keyword id="KW-0007">Acetylation</keyword>
<keyword id="KW-0025">Alternative splicing</keyword>
<keyword id="KW-0963">Cytoplasm</keyword>
<keyword id="KW-0539">Nucleus</keyword>
<keyword id="KW-0597">Phosphoprotein</keyword>
<keyword id="KW-1267">Proteomics identification</keyword>
<keyword id="KW-1185">Reference proteome</keyword>
<keyword id="KW-0677">Repeat</keyword>
<keyword id="KW-0694">RNA-binding</keyword>
<gene>
    <name type="primary">RAVER1</name>
    <name type="synonym">KIAA1978</name>
</gene>
<name>RAVR1_HUMAN</name>
<accession>Q8IY67</accession>
<accession>A6NMU4</accession>
<accession>Q8IY60</accession>
<accession>Q8TF24</accession>
<comment type="function">
    <text evidence="1">Cooperates with PTBP1 to modulate regulated alternative splicing events. Promotes exon skipping. Cooperates with PTBP1 to modulate switching between mutually exclusive exons during maturation of the TPM1 pre-mRNA (By similarity).</text>
</comment>
<comment type="subunit">
    <text evidence="1">Interacts with PTBP1, RAVER2, VCL and ACTN1. Part of a complex containing RAVER1, VCL and ACTN1 (By similarity).</text>
</comment>
<comment type="interaction">
    <interactant intactId="EBI-2105155">
        <id>Q8IY67</id>
    </interactant>
    <interactant intactId="EBI-1054261">
        <id>Q9H9A5</id>
        <label>CNOT10</label>
    </interactant>
    <organismsDiffer>false</organismsDiffer>
    <experiments>3</experiments>
</comment>
<comment type="interaction">
    <interactant intactId="EBI-2105155">
        <id>Q8IY67</id>
    </interactant>
    <interactant intactId="EBI-740418">
        <id>O75791</id>
        <label>GRAP2</label>
    </interactant>
    <organismsDiffer>false</organismsDiffer>
    <experiments>3</experiments>
</comment>
<comment type="interaction">
    <interactant intactId="EBI-2105155">
        <id>Q8IY67</id>
    </interactant>
    <interactant intactId="EBI-723281">
        <id>P50616</id>
        <label>TOB1</label>
    </interactant>
    <organismsDiffer>false</organismsDiffer>
    <experiments>3</experiments>
</comment>
<comment type="interaction">
    <interactant intactId="EBI-15788272">
        <id>Q8IY67-1</id>
    </interactant>
    <interactant intactId="EBI-11027067">
        <id>P18206-2</id>
        <label>VCL</label>
    </interactant>
    <organismsDiffer>false</organismsDiffer>
    <experiments>3</experiments>
</comment>
<comment type="subcellular location">
    <subcellularLocation>
        <location evidence="1">Nucleus</location>
    </subcellularLocation>
    <subcellularLocation>
        <location evidence="1">Cytoplasm</location>
    </subcellularLocation>
    <text evidence="1">Nuclear, in perinucleolar structures. Shuttles between nucleus and cytoplasm. Cytoplasm, at focal contacts and cell-cell contacts. Associated with myotubes during muscle differentiation (By similarity).</text>
</comment>
<comment type="alternative products">
    <event type="alternative splicing"/>
    <isoform>
        <id>Q8IY67-1</id>
        <name>1</name>
        <sequence type="displayed"/>
    </isoform>
    <isoform>
        <id>Q8IY67-2</id>
        <name>2</name>
        <sequence type="described" ref="VSP_017035 VSP_017036"/>
    </isoform>
    <isoform>
        <id>Q8IY67-3</id>
        <name>3</name>
        <sequence type="described" ref="VSP_040968 VSP_040969"/>
    </isoform>
</comment>
<comment type="miscellaneous">
    <molecule>Isoform 3</molecule>
    <text evidence="8">May be produced at very low levels due to a premature stop codon in the mRNA, leading to nonsense-mediated mRNA decay.</text>
</comment>
<comment type="sequence caution" evidence="8">
    <conflict type="miscellaneous discrepancy">
        <sequence resource="EMBL-CDS" id="AAH37565"/>
    </conflict>
    <text>Probable cloning artifact.</text>
</comment>
<comment type="sequence caution" evidence="8">
    <conflict type="miscellaneous discrepancy">
        <sequence resource="EMBL-CDS" id="BAB85564"/>
    </conflict>
    <text>Intron retention.</text>
</comment>
<reference key="1">
    <citation type="journal article" date="2001" name="DNA Res.">
        <title>Prediction of the coding sequences of unidentified human genes. XXII. The complete sequences of 50 new cDNA clones which code for large proteins.</title>
        <authorList>
            <person name="Nagase T."/>
            <person name="Kikuno R."/>
            <person name="Ohara O."/>
        </authorList>
    </citation>
    <scope>NUCLEOTIDE SEQUENCE [LARGE SCALE MRNA] (ISOFORM 3)</scope>
    <source>
        <tissue>Brain</tissue>
    </source>
</reference>
<reference key="2">
    <citation type="journal article" date="2004" name="Nature">
        <title>The DNA sequence and biology of human chromosome 19.</title>
        <authorList>
            <person name="Grimwood J."/>
            <person name="Gordon L.A."/>
            <person name="Olsen A.S."/>
            <person name="Terry A."/>
            <person name="Schmutz J."/>
            <person name="Lamerdin J.E."/>
            <person name="Hellsten U."/>
            <person name="Goodstein D."/>
            <person name="Couronne O."/>
            <person name="Tran-Gyamfi M."/>
            <person name="Aerts A."/>
            <person name="Altherr M."/>
            <person name="Ashworth L."/>
            <person name="Bajorek E."/>
            <person name="Black S."/>
            <person name="Branscomb E."/>
            <person name="Caenepeel S."/>
            <person name="Carrano A.V."/>
            <person name="Caoile C."/>
            <person name="Chan Y.M."/>
            <person name="Christensen M."/>
            <person name="Cleland C.A."/>
            <person name="Copeland A."/>
            <person name="Dalin E."/>
            <person name="Dehal P."/>
            <person name="Denys M."/>
            <person name="Detter J.C."/>
            <person name="Escobar J."/>
            <person name="Flowers D."/>
            <person name="Fotopulos D."/>
            <person name="Garcia C."/>
            <person name="Georgescu A.M."/>
            <person name="Glavina T."/>
            <person name="Gomez M."/>
            <person name="Gonzales E."/>
            <person name="Groza M."/>
            <person name="Hammon N."/>
            <person name="Hawkins T."/>
            <person name="Haydu L."/>
            <person name="Ho I."/>
            <person name="Huang W."/>
            <person name="Israni S."/>
            <person name="Jett J."/>
            <person name="Kadner K."/>
            <person name="Kimball H."/>
            <person name="Kobayashi A."/>
            <person name="Larionov V."/>
            <person name="Leem S.-H."/>
            <person name="Lopez F."/>
            <person name="Lou Y."/>
            <person name="Lowry S."/>
            <person name="Malfatti S."/>
            <person name="Martinez D."/>
            <person name="McCready P.M."/>
            <person name="Medina C."/>
            <person name="Morgan J."/>
            <person name="Nelson K."/>
            <person name="Nolan M."/>
            <person name="Ovcharenko I."/>
            <person name="Pitluck S."/>
            <person name="Pollard M."/>
            <person name="Popkie A.P."/>
            <person name="Predki P."/>
            <person name="Quan G."/>
            <person name="Ramirez L."/>
            <person name="Rash S."/>
            <person name="Retterer J."/>
            <person name="Rodriguez A."/>
            <person name="Rogers S."/>
            <person name="Salamov A."/>
            <person name="Salazar A."/>
            <person name="She X."/>
            <person name="Smith D."/>
            <person name="Slezak T."/>
            <person name="Solovyev V."/>
            <person name="Thayer N."/>
            <person name="Tice H."/>
            <person name="Tsai M."/>
            <person name="Ustaszewska A."/>
            <person name="Vo N."/>
            <person name="Wagner M."/>
            <person name="Wheeler J."/>
            <person name="Wu K."/>
            <person name="Xie G."/>
            <person name="Yang J."/>
            <person name="Dubchak I."/>
            <person name="Furey T.S."/>
            <person name="DeJong P."/>
            <person name="Dickson M."/>
            <person name="Gordon D."/>
            <person name="Eichler E.E."/>
            <person name="Pennacchio L.A."/>
            <person name="Richardson P."/>
            <person name="Stubbs L."/>
            <person name="Rokhsar D.S."/>
            <person name="Myers R.M."/>
            <person name="Rubin E.M."/>
            <person name="Lucas S.M."/>
        </authorList>
    </citation>
    <scope>NUCLEOTIDE SEQUENCE [LARGE SCALE GENOMIC DNA]</scope>
</reference>
<reference key="3">
    <citation type="journal article" date="2004" name="Genome Res.">
        <title>The status, quality, and expansion of the NIH full-length cDNA project: the Mammalian Gene Collection (MGC).</title>
        <authorList>
            <consortium name="The MGC Project Team"/>
        </authorList>
    </citation>
    <scope>NUCLEOTIDE SEQUENCE [LARGE SCALE MRNA] (ISOFORM 1)</scope>
    <scope>NUCLEOTIDE SEQUENCE [LARGE SCALE MRNA] OF 182-606 (ISOFORM 2)</scope>
    <source>
        <tissue>Cervix</tissue>
        <tissue>Uterus</tissue>
    </source>
</reference>
<reference key="4">
    <citation type="journal article" date="2003" name="Nature">
        <title>Proteomic characterization of the human centrosome by protein correlation profiling.</title>
        <authorList>
            <person name="Andersen J.S."/>
            <person name="Wilkinson C.J."/>
            <person name="Mayor T."/>
            <person name="Mortensen P."/>
            <person name="Nigg E.A."/>
            <person name="Mann M."/>
        </authorList>
    </citation>
    <scope>IDENTIFICATION BY MASS SPECTROMETRY</scope>
    <source>
        <tissue>Lymphoblast</tissue>
    </source>
</reference>
<reference key="5">
    <citation type="journal article" date="2006" name="Cell">
        <title>Global, in vivo, and site-specific phosphorylation dynamics in signaling networks.</title>
        <authorList>
            <person name="Olsen J.V."/>
            <person name="Blagoev B."/>
            <person name="Gnad F."/>
            <person name="Macek B."/>
            <person name="Kumar C."/>
            <person name="Mortensen P."/>
            <person name="Mann M."/>
        </authorList>
    </citation>
    <scope>IDENTIFICATION BY MASS SPECTROMETRY [LARGE SCALE ANALYSIS]</scope>
    <source>
        <tissue>Cervix carcinoma</tissue>
    </source>
</reference>
<reference key="6">
    <citation type="journal article" date="2006" name="Nat. Biotechnol.">
        <title>A probability-based approach for high-throughput protein phosphorylation analysis and site localization.</title>
        <authorList>
            <person name="Beausoleil S.A."/>
            <person name="Villen J."/>
            <person name="Gerber S.A."/>
            <person name="Rush J."/>
            <person name="Gygi S.P."/>
        </authorList>
    </citation>
    <scope>PHOSPHORYLATION [LARGE SCALE ANALYSIS] AT THR-463</scope>
    <scope>IDENTIFICATION BY MASS SPECTROMETRY [LARGE SCALE ANALYSIS]</scope>
    <source>
        <tissue>Cervix carcinoma</tissue>
    </source>
</reference>
<reference key="7">
    <citation type="journal article" date="2008" name="Mol. Cell">
        <title>Kinase-selective enrichment enables quantitative phosphoproteomics of the kinome across the cell cycle.</title>
        <authorList>
            <person name="Daub H."/>
            <person name="Olsen J.V."/>
            <person name="Bairlein M."/>
            <person name="Gnad F."/>
            <person name="Oppermann F.S."/>
            <person name="Korner R."/>
            <person name="Greff Z."/>
            <person name="Keri G."/>
            <person name="Stemmann O."/>
            <person name="Mann M."/>
        </authorList>
    </citation>
    <scope>PHOSPHORYLATION [LARGE SCALE ANALYSIS] AT THR-463</scope>
    <scope>PHOSPHORYLATION [LARGE SCALE ANALYSIS] AT SER-567 (ISOFORM 2)</scope>
    <scope>IDENTIFICATION BY MASS SPECTROMETRY [LARGE SCALE ANALYSIS]</scope>
    <source>
        <tissue>Cervix carcinoma</tissue>
    </source>
</reference>
<reference key="8">
    <citation type="journal article" date="2008" name="Proc. Natl. Acad. Sci. U.S.A.">
        <title>A quantitative atlas of mitotic phosphorylation.</title>
        <authorList>
            <person name="Dephoure N."/>
            <person name="Zhou C."/>
            <person name="Villen J."/>
            <person name="Beausoleil S.A."/>
            <person name="Bakalarski C.E."/>
            <person name="Elledge S.J."/>
            <person name="Gygi S.P."/>
        </authorList>
    </citation>
    <scope>PHOSPHORYLATION [LARGE SCALE ANALYSIS] AT THR-488 AND SER-567 (ISOFORM 2)</scope>
    <scope>IDENTIFICATION BY MASS SPECTROMETRY [LARGE SCALE ANALYSIS]</scope>
    <source>
        <tissue>Cervix carcinoma</tissue>
    </source>
</reference>
<reference key="9">
    <citation type="journal article" date="2009" name="Anal. Chem.">
        <title>Lys-N and trypsin cover complementary parts of the phosphoproteome in a refined SCX-based approach.</title>
        <authorList>
            <person name="Gauci S."/>
            <person name="Helbig A.O."/>
            <person name="Slijper M."/>
            <person name="Krijgsveld J."/>
            <person name="Heck A.J."/>
            <person name="Mohammed S."/>
        </authorList>
    </citation>
    <scope>ACETYLATION [LARGE SCALE ANALYSIS] AT ALA-2</scope>
    <scope>CLEAVAGE OF INITIATOR METHIONINE [LARGE SCALE ANALYSIS]</scope>
    <scope>IDENTIFICATION BY MASS SPECTROMETRY [LARGE SCALE ANALYSIS]</scope>
</reference>
<reference key="10">
    <citation type="journal article" date="2009" name="Mol. Cell. Proteomics">
        <title>Large-scale proteomics analysis of the human kinome.</title>
        <authorList>
            <person name="Oppermann F.S."/>
            <person name="Gnad F."/>
            <person name="Olsen J.V."/>
            <person name="Hornberger R."/>
            <person name="Greff Z."/>
            <person name="Keri G."/>
            <person name="Mann M."/>
            <person name="Daub H."/>
        </authorList>
    </citation>
    <scope>ACETYLATION [LARGE SCALE ANALYSIS] AT ALA-2</scope>
    <scope>PHOSPHORYLATION [LARGE SCALE ANALYSIS] AT SER-14</scope>
    <scope>CLEAVAGE OF INITIATOR METHIONINE [LARGE SCALE ANALYSIS]</scope>
    <scope>IDENTIFICATION BY MASS SPECTROMETRY [LARGE SCALE ANALYSIS]</scope>
</reference>
<reference key="11">
    <citation type="journal article" date="2009" name="Sci. Signal.">
        <title>Quantitative phosphoproteomic analysis of T cell receptor signaling reveals system-wide modulation of protein-protein interactions.</title>
        <authorList>
            <person name="Mayya V."/>
            <person name="Lundgren D.H."/>
            <person name="Hwang S.-I."/>
            <person name="Rezaul K."/>
            <person name="Wu L."/>
            <person name="Eng J.K."/>
            <person name="Rodionov V."/>
            <person name="Han D.K."/>
        </authorList>
    </citation>
    <scope>PHOSPHORYLATION [LARGE SCALE ANALYSIS] AT THR-463</scope>
    <scope>IDENTIFICATION BY MASS SPECTROMETRY [LARGE SCALE ANALYSIS]</scope>
    <source>
        <tissue>Leukemic T-cell</tissue>
    </source>
</reference>
<reference key="12">
    <citation type="journal article" date="2010" name="Sci. Signal.">
        <title>Quantitative phosphoproteomics reveals widespread full phosphorylation site occupancy during mitosis.</title>
        <authorList>
            <person name="Olsen J.V."/>
            <person name="Vermeulen M."/>
            <person name="Santamaria A."/>
            <person name="Kumar C."/>
            <person name="Miller M.L."/>
            <person name="Jensen L.J."/>
            <person name="Gnad F."/>
            <person name="Cox J."/>
            <person name="Jensen T.S."/>
            <person name="Nigg E.A."/>
            <person name="Brunak S."/>
            <person name="Mann M."/>
        </authorList>
    </citation>
    <scope>ACETYLATION [LARGE SCALE ANALYSIS] AT ALA-2</scope>
    <scope>PHOSPHORYLATION [LARGE SCALE ANALYSIS] AT SER-14; THR-463 AND SER-474</scope>
    <scope>PHOSPHORYLATION [LARGE SCALE ANALYSIS] AT THR-488 AND SER-567 (ISOFORM 2)</scope>
    <scope>CLEAVAGE OF INITIATOR METHIONINE [LARGE SCALE ANALYSIS]</scope>
    <scope>IDENTIFICATION BY MASS SPECTROMETRY [LARGE SCALE ANALYSIS]</scope>
    <source>
        <tissue>Cervix carcinoma</tissue>
    </source>
</reference>
<reference key="13">
    <citation type="journal article" date="2011" name="BMC Syst. Biol.">
        <title>Initial characterization of the human central proteome.</title>
        <authorList>
            <person name="Burkard T.R."/>
            <person name="Planyavsky M."/>
            <person name="Kaupe I."/>
            <person name="Breitwieser F.P."/>
            <person name="Buerckstuemmer T."/>
            <person name="Bennett K.L."/>
            <person name="Superti-Furga G."/>
            <person name="Colinge J."/>
        </authorList>
    </citation>
    <scope>IDENTIFICATION BY MASS SPECTROMETRY [LARGE SCALE ANALYSIS]</scope>
</reference>
<reference key="14">
    <citation type="journal article" date="2011" name="Sci. Signal.">
        <title>System-wide temporal characterization of the proteome and phosphoproteome of human embryonic stem cell differentiation.</title>
        <authorList>
            <person name="Rigbolt K.T."/>
            <person name="Prokhorova T.A."/>
            <person name="Akimov V."/>
            <person name="Henningsen J."/>
            <person name="Johansen P.T."/>
            <person name="Kratchmarova I."/>
            <person name="Kassem M."/>
            <person name="Mann M."/>
            <person name="Olsen J.V."/>
            <person name="Blagoev B."/>
        </authorList>
    </citation>
    <scope>ACETYLATION [LARGE SCALE ANALYSIS] AT ALA-2</scope>
    <scope>PHOSPHORYLATION [LARGE SCALE ANALYSIS] AT SER-14 AND THR-463</scope>
    <scope>PHOSPHORYLATION [LARGE SCALE ANALYSIS] AT SER-567 (ISOFORM 2)</scope>
    <scope>CLEAVAGE OF INITIATOR METHIONINE [LARGE SCALE ANALYSIS]</scope>
    <scope>IDENTIFICATION BY MASS SPECTROMETRY [LARGE SCALE ANALYSIS]</scope>
</reference>
<reference key="15">
    <citation type="journal article" date="2013" name="J. Proteome Res.">
        <title>Toward a comprehensive characterization of a human cancer cell phosphoproteome.</title>
        <authorList>
            <person name="Zhou H."/>
            <person name="Di Palma S."/>
            <person name="Preisinger C."/>
            <person name="Peng M."/>
            <person name="Polat A.N."/>
            <person name="Heck A.J."/>
            <person name="Mohammed S."/>
        </authorList>
    </citation>
    <scope>PHOSPHORYLATION [LARGE SCALE ANALYSIS] AT SER-6; SER-14 AND THR-463</scope>
    <scope>IDENTIFICATION BY MASS SPECTROMETRY [LARGE SCALE ANALYSIS]</scope>
    <source>
        <tissue>Cervix carcinoma</tissue>
        <tissue>Erythroleukemia</tissue>
    </source>
</reference>
<reference key="16">
    <citation type="journal article" date="2014" name="J. Proteomics">
        <title>An enzyme assisted RP-RPLC approach for in-depth analysis of human liver phosphoproteome.</title>
        <authorList>
            <person name="Bian Y."/>
            <person name="Song C."/>
            <person name="Cheng K."/>
            <person name="Dong M."/>
            <person name="Wang F."/>
            <person name="Huang J."/>
            <person name="Sun D."/>
            <person name="Wang L."/>
            <person name="Ye M."/>
            <person name="Zou H."/>
        </authorList>
    </citation>
    <scope>PHOSPHORYLATION [LARGE SCALE ANALYSIS] AT THR-463</scope>
    <scope>IDENTIFICATION BY MASS SPECTROMETRY [LARGE SCALE ANALYSIS]</scope>
    <source>
        <tissue>Liver</tissue>
    </source>
</reference>
<organism>
    <name type="scientific">Homo sapiens</name>
    <name type="common">Human</name>
    <dbReference type="NCBI Taxonomy" id="9606"/>
    <lineage>
        <taxon>Eukaryota</taxon>
        <taxon>Metazoa</taxon>
        <taxon>Chordata</taxon>
        <taxon>Craniata</taxon>
        <taxon>Vertebrata</taxon>
        <taxon>Euteleostomi</taxon>
        <taxon>Mammalia</taxon>
        <taxon>Eutheria</taxon>
        <taxon>Euarchontoglires</taxon>
        <taxon>Primates</taxon>
        <taxon>Haplorrhini</taxon>
        <taxon>Catarrhini</taxon>
        <taxon>Hominidae</taxon>
        <taxon>Homo</taxon>
    </lineage>
</organism>
<sequence length="606" mass="63877">MAADVSVTHRPPLSPKSGAEVEAGDAAERRAPEEELPPLDPEEIRKRLEHTERQFRNRRKILIRGLPGDVTNQEVHDLLSDYELKYCFVDKYKGTAFVTLLNGEQAEAAINAFHQSRLRERELSVQLQPTDALLCVANLPPSLTQQQFEELVRPFGSLERCFLVYSERTGQSKGYGFAEYMKKDSAARAKSDLLGKPLGPRTLYVHWTDAGQLTPALLHSRCLCVDRLPPGFNDVDALCRALSAVHSPTFCQLACGQDGQLKGFAVLEYETAEMAEEAQQQADGLSLGGSHLRVSFCAPGPPGRSMLAALIAAQATALNRGKGLLPEPNILQLLNNLGPSASLQLLLNPLLHGSAGGKQGLLGAPPAMPLLNGPALSTALLQLALQTQGQKKPGILGDSPLGALQPGAQPANPLLGELPAGGGLPPELPPRRGKPPPLLPSVLGPAGGDREALGLGPPAAQLTPPPAPVGLRGSGLRGPLSHFYSGSPTSYFTSGLQAGLKQSHLSKAIGSSPLGSGEGLLGLSPGPNGHSHLLKVRAGGGDMQGWEAPAPQRPLTRPALPSVSRPHWAARNAALPTCCPRPSPAQKAAMWASTPRASAATTRTPT</sequence>
<proteinExistence type="evidence at protein level"/>